<sequence length="228" mass="24812">MSSTKHRIDLGTTYSCVGVFKNEQVDIIANDQGNRTTPSYVAFTETERLIGDARRTRWHEPPGNTVFDEAHDRPQVRRPDLQSDMKHWPFKVIVKDGKPVISVEYQNQTKTFSRGDLGYGAAENEGDGGGYLGTTVKDAVITVPAYFNDSQRQATKDAGSIAGLNVLRIINEPTAAAIAYGMDRKGDKGEKNVLIFDLGGGTFDVTLLTIESGVFEVKATAGDTHLGG</sequence>
<feature type="chain" id="PRO_0000078307" description="Heat shock 70-related protein 4">
    <location>
        <begin position="1"/>
        <end position="228" status="greater than"/>
    </location>
</feature>
<feature type="region of interest" description="Disordered" evidence="1">
    <location>
        <begin position="57"/>
        <end position="80"/>
    </location>
</feature>
<feature type="compositionally biased region" description="Basic and acidic residues" evidence="1">
    <location>
        <begin position="68"/>
        <end position="80"/>
    </location>
</feature>
<feature type="non-terminal residue">
    <location>
        <position position="228"/>
    </location>
</feature>
<comment type="similarity">
    <text evidence="2">Belongs to the heat shock protein 70 family.</text>
</comment>
<protein>
    <recommendedName>
        <fullName>Heat shock 70-related protein 4</fullName>
    </recommendedName>
</protein>
<dbReference type="EMBL" id="X14575">
    <property type="protein sequence ID" value="CAA32714.1"/>
    <property type="molecule type" value="Genomic_DNA"/>
</dbReference>
<dbReference type="PIR" id="S05439">
    <property type="entry name" value="S05439"/>
</dbReference>
<dbReference type="SMR" id="P12077"/>
<dbReference type="VEuPathDB" id="TriTrypDB:LmjF.26.1240"/>
<dbReference type="VEuPathDB" id="TriTrypDB:LMJFC_260018700"/>
<dbReference type="VEuPathDB" id="TriTrypDB:LMJLV39_260018100"/>
<dbReference type="VEuPathDB" id="TriTrypDB:LMJSD75_260016500"/>
<dbReference type="GO" id="GO:0005524">
    <property type="term" value="F:ATP binding"/>
    <property type="evidence" value="ECO:0007669"/>
    <property type="project" value="UniProtKB-KW"/>
</dbReference>
<dbReference type="GO" id="GO:0140662">
    <property type="term" value="F:ATP-dependent protein folding chaperone"/>
    <property type="evidence" value="ECO:0007669"/>
    <property type="project" value="InterPro"/>
</dbReference>
<dbReference type="FunFam" id="3.30.30.30:FF:000005">
    <property type="entry name" value="Heat shock protein ssb1"/>
    <property type="match status" value="1"/>
</dbReference>
<dbReference type="Gene3D" id="3.30.30.30">
    <property type="match status" value="1"/>
</dbReference>
<dbReference type="Gene3D" id="3.30.420.40">
    <property type="match status" value="2"/>
</dbReference>
<dbReference type="InterPro" id="IPR043129">
    <property type="entry name" value="ATPase_NBD"/>
</dbReference>
<dbReference type="InterPro" id="IPR018181">
    <property type="entry name" value="Heat_shock_70_CS"/>
</dbReference>
<dbReference type="InterPro" id="IPR013126">
    <property type="entry name" value="Hsp_70_fam"/>
</dbReference>
<dbReference type="PANTHER" id="PTHR19375">
    <property type="entry name" value="HEAT SHOCK PROTEIN 70KDA"/>
    <property type="match status" value="1"/>
</dbReference>
<dbReference type="Pfam" id="PF00012">
    <property type="entry name" value="HSP70"/>
    <property type="match status" value="1"/>
</dbReference>
<dbReference type="PRINTS" id="PR00301">
    <property type="entry name" value="HEATSHOCK70"/>
</dbReference>
<dbReference type="SUPFAM" id="SSF53067">
    <property type="entry name" value="Actin-like ATPase domain"/>
    <property type="match status" value="2"/>
</dbReference>
<dbReference type="PROSITE" id="PS00297">
    <property type="entry name" value="HSP70_1"/>
    <property type="match status" value="1"/>
</dbReference>
<dbReference type="PROSITE" id="PS00329">
    <property type="entry name" value="HSP70_2"/>
    <property type="match status" value="1"/>
</dbReference>
<keyword id="KW-0067">ATP-binding</keyword>
<keyword id="KW-0547">Nucleotide-binding</keyword>
<keyword id="KW-0346">Stress response</keyword>
<organism>
    <name type="scientific">Leishmania major</name>
    <dbReference type="NCBI Taxonomy" id="5664"/>
    <lineage>
        <taxon>Eukaryota</taxon>
        <taxon>Discoba</taxon>
        <taxon>Euglenozoa</taxon>
        <taxon>Kinetoplastea</taxon>
        <taxon>Metakinetoplastina</taxon>
        <taxon>Trypanosomatida</taxon>
        <taxon>Trypanosomatidae</taxon>
        <taxon>Leishmaniinae</taxon>
        <taxon>Leishmania</taxon>
    </lineage>
</organism>
<reference key="1">
    <citation type="journal article" date="1989" name="Nucleic Acids Res.">
        <title>A family of heat shock protein 70-related genes are expressed in the promastigotes of Leishmania major.</title>
        <authorList>
            <person name="Searle S."/>
            <person name="Campos A.J.R."/>
            <person name="Coulson R.M.R."/>
            <person name="Spithill T.W."/>
            <person name="Smith D.F."/>
        </authorList>
    </citation>
    <scope>NUCLEOTIDE SEQUENCE [GENOMIC DNA]</scope>
    <source>
        <strain>MHOM/IL/8/Friedlin</strain>
    </source>
</reference>
<accession>P12077</accession>
<name>HSP74_LEIMA</name>
<gene>
    <name type="primary">HSP70.4</name>
</gene>
<proteinExistence type="inferred from homology"/>
<evidence type="ECO:0000256" key="1">
    <source>
        <dbReference type="SAM" id="MobiDB-lite"/>
    </source>
</evidence>
<evidence type="ECO:0000305" key="2"/>